<reference key="1">
    <citation type="journal article" date="2003" name="Science">
        <title>Genome of Geobacter sulfurreducens: metal reduction in subsurface environments.</title>
        <authorList>
            <person name="Methe B.A."/>
            <person name="Nelson K.E."/>
            <person name="Eisen J.A."/>
            <person name="Paulsen I.T."/>
            <person name="Nelson W.C."/>
            <person name="Heidelberg J.F."/>
            <person name="Wu D."/>
            <person name="Wu M."/>
            <person name="Ward N.L."/>
            <person name="Beanan M.J."/>
            <person name="Dodson R.J."/>
            <person name="Madupu R."/>
            <person name="Brinkac L.M."/>
            <person name="Daugherty S.C."/>
            <person name="DeBoy R.T."/>
            <person name="Durkin A.S."/>
            <person name="Gwinn M.L."/>
            <person name="Kolonay J.F."/>
            <person name="Sullivan S.A."/>
            <person name="Haft D.H."/>
            <person name="Selengut J."/>
            <person name="Davidsen T.M."/>
            <person name="Zafar N."/>
            <person name="White O."/>
            <person name="Tran B."/>
            <person name="Romero C."/>
            <person name="Forberger H.A."/>
            <person name="Weidman J.F."/>
            <person name="Khouri H.M."/>
            <person name="Feldblyum T.V."/>
            <person name="Utterback T.R."/>
            <person name="Van Aken S.E."/>
            <person name="Lovley D.R."/>
            <person name="Fraser C.M."/>
        </authorList>
    </citation>
    <scope>NUCLEOTIDE SEQUENCE [LARGE SCALE GENOMIC DNA]</scope>
    <source>
        <strain>ATCC 51573 / DSM 12127 / PCA</strain>
    </source>
</reference>
<name>Y386_GEOSL</name>
<proteinExistence type="inferred from homology"/>
<feature type="chain" id="PRO_0000190701" description="UPF0758 protein GSU0386">
    <location>
        <begin position="1"/>
        <end position="229"/>
    </location>
</feature>
<feature type="domain" description="MPN" evidence="1">
    <location>
        <begin position="107"/>
        <end position="229"/>
    </location>
</feature>
<feature type="short sequence motif" description="JAMM motif" evidence="1">
    <location>
        <begin position="178"/>
        <end position="191"/>
    </location>
</feature>
<feature type="binding site" evidence="1">
    <location>
        <position position="178"/>
    </location>
    <ligand>
        <name>Zn(2+)</name>
        <dbReference type="ChEBI" id="CHEBI:29105"/>
        <note>catalytic</note>
    </ligand>
</feature>
<feature type="binding site" evidence="1">
    <location>
        <position position="180"/>
    </location>
    <ligand>
        <name>Zn(2+)</name>
        <dbReference type="ChEBI" id="CHEBI:29105"/>
        <note>catalytic</note>
    </ligand>
</feature>
<feature type="binding site" evidence="1">
    <location>
        <position position="191"/>
    </location>
    <ligand>
        <name>Zn(2+)</name>
        <dbReference type="ChEBI" id="CHEBI:29105"/>
        <note>catalytic</note>
    </ligand>
</feature>
<comment type="similarity">
    <text evidence="2">Belongs to the UPF0758 family.</text>
</comment>
<organism>
    <name type="scientific">Geobacter sulfurreducens (strain ATCC 51573 / DSM 12127 / PCA)</name>
    <dbReference type="NCBI Taxonomy" id="243231"/>
    <lineage>
        <taxon>Bacteria</taxon>
        <taxon>Pseudomonadati</taxon>
        <taxon>Thermodesulfobacteriota</taxon>
        <taxon>Desulfuromonadia</taxon>
        <taxon>Geobacterales</taxon>
        <taxon>Geobacteraceae</taxon>
        <taxon>Geobacter</taxon>
    </lineage>
</organism>
<dbReference type="EMBL" id="AE017180">
    <property type="protein sequence ID" value="AAR33718.1"/>
    <property type="molecule type" value="Genomic_DNA"/>
</dbReference>
<dbReference type="RefSeq" id="NP_951445.1">
    <property type="nucleotide sequence ID" value="NC_002939.5"/>
</dbReference>
<dbReference type="SMR" id="Q74G62"/>
<dbReference type="FunCoup" id="Q74G62">
    <property type="interactions" value="212"/>
</dbReference>
<dbReference type="STRING" id="243231.GSU0386"/>
<dbReference type="EnsemblBacteria" id="AAR33718">
    <property type="protein sequence ID" value="AAR33718"/>
    <property type="gene ID" value="GSU0386"/>
</dbReference>
<dbReference type="KEGG" id="gsu:GSU0386"/>
<dbReference type="PATRIC" id="fig|243231.5.peg.384"/>
<dbReference type="eggNOG" id="COG2003">
    <property type="taxonomic scope" value="Bacteria"/>
</dbReference>
<dbReference type="HOGENOM" id="CLU_073529_0_2_7"/>
<dbReference type="InParanoid" id="Q74G62"/>
<dbReference type="OrthoDB" id="9804482at2"/>
<dbReference type="Proteomes" id="UP000000577">
    <property type="component" value="Chromosome"/>
</dbReference>
<dbReference type="GO" id="GO:0046872">
    <property type="term" value="F:metal ion binding"/>
    <property type="evidence" value="ECO:0007669"/>
    <property type="project" value="UniProtKB-KW"/>
</dbReference>
<dbReference type="GO" id="GO:0008237">
    <property type="term" value="F:metallopeptidase activity"/>
    <property type="evidence" value="ECO:0007669"/>
    <property type="project" value="UniProtKB-KW"/>
</dbReference>
<dbReference type="GO" id="GO:0006508">
    <property type="term" value="P:proteolysis"/>
    <property type="evidence" value="ECO:0007669"/>
    <property type="project" value="UniProtKB-KW"/>
</dbReference>
<dbReference type="CDD" id="cd08071">
    <property type="entry name" value="MPN_DUF2466"/>
    <property type="match status" value="1"/>
</dbReference>
<dbReference type="Gene3D" id="1.10.150.20">
    <property type="entry name" value="5' to 3' exonuclease, C-terminal subdomain"/>
    <property type="match status" value="1"/>
</dbReference>
<dbReference type="Gene3D" id="3.40.140.10">
    <property type="entry name" value="Cytidine Deaminase, domain 2"/>
    <property type="match status" value="1"/>
</dbReference>
<dbReference type="InterPro" id="IPR037518">
    <property type="entry name" value="MPN"/>
</dbReference>
<dbReference type="InterPro" id="IPR025657">
    <property type="entry name" value="RadC_JAB"/>
</dbReference>
<dbReference type="InterPro" id="IPR010994">
    <property type="entry name" value="RuvA_2-like"/>
</dbReference>
<dbReference type="InterPro" id="IPR001405">
    <property type="entry name" value="UPF0758"/>
</dbReference>
<dbReference type="InterPro" id="IPR046778">
    <property type="entry name" value="UPF0758_N"/>
</dbReference>
<dbReference type="NCBIfam" id="NF000642">
    <property type="entry name" value="PRK00024.1"/>
    <property type="match status" value="1"/>
</dbReference>
<dbReference type="NCBIfam" id="TIGR00608">
    <property type="entry name" value="radc"/>
    <property type="match status" value="1"/>
</dbReference>
<dbReference type="PANTHER" id="PTHR30471">
    <property type="entry name" value="DNA REPAIR PROTEIN RADC"/>
    <property type="match status" value="1"/>
</dbReference>
<dbReference type="PANTHER" id="PTHR30471:SF3">
    <property type="entry name" value="UPF0758 PROTEIN YEES-RELATED"/>
    <property type="match status" value="1"/>
</dbReference>
<dbReference type="Pfam" id="PF04002">
    <property type="entry name" value="RadC"/>
    <property type="match status" value="1"/>
</dbReference>
<dbReference type="Pfam" id="PF20582">
    <property type="entry name" value="UPF0758_N"/>
    <property type="match status" value="1"/>
</dbReference>
<dbReference type="SUPFAM" id="SSF102712">
    <property type="entry name" value="JAB1/MPN domain"/>
    <property type="match status" value="1"/>
</dbReference>
<dbReference type="SUPFAM" id="SSF47781">
    <property type="entry name" value="RuvA domain 2-like"/>
    <property type="match status" value="1"/>
</dbReference>
<dbReference type="PROSITE" id="PS50249">
    <property type="entry name" value="MPN"/>
    <property type="match status" value="1"/>
</dbReference>
<evidence type="ECO:0000255" key="1">
    <source>
        <dbReference type="PROSITE-ProRule" id="PRU01182"/>
    </source>
</evidence>
<evidence type="ECO:0000305" key="2"/>
<accession>Q74G62</accession>
<sequence>MAGGIKAWPEDERPREKLLRRGAPVLSDAELLALIIRTGDSVTGRSAIDLGRALLQECGDLRTLAGATVSELCAVKGMGTAKATSIKAALEMASRINSERLMICSERFTSPEQVYNHYHYAFRDRRKEYFMALLLDGKNRIMREIQVSEGSLNQSIVHPREVFNPAVRESAAAVILVHNHPTGDPAPSREDLEITRRLREAGDIMGIRVLDHIIIGDGRFTSFVSAGLL</sequence>
<gene>
    <name type="ordered locus">GSU0386</name>
</gene>
<protein>
    <recommendedName>
        <fullName>UPF0758 protein GSU0386</fullName>
    </recommendedName>
</protein>
<keyword id="KW-0378">Hydrolase</keyword>
<keyword id="KW-0479">Metal-binding</keyword>
<keyword id="KW-0482">Metalloprotease</keyword>
<keyword id="KW-0645">Protease</keyword>
<keyword id="KW-1185">Reference proteome</keyword>
<keyword id="KW-0862">Zinc</keyword>